<keyword id="KW-1185">Reference proteome</keyword>
<keyword id="KW-0687">Ribonucleoprotein</keyword>
<keyword id="KW-0689">Ribosomal protein</keyword>
<keyword id="KW-0694">RNA-binding</keyword>
<keyword id="KW-0699">rRNA-binding</keyword>
<organism>
    <name type="scientific">Phytoplasma australiense</name>
    <dbReference type="NCBI Taxonomy" id="59748"/>
    <lineage>
        <taxon>Bacteria</taxon>
        <taxon>Bacillati</taxon>
        <taxon>Mycoplasmatota</taxon>
        <taxon>Mollicutes</taxon>
        <taxon>Acholeplasmatales</taxon>
        <taxon>Acholeplasmataceae</taxon>
        <taxon>Candidatus Phytoplasma</taxon>
        <taxon>16SrXII (Stolbur group)</taxon>
    </lineage>
</organism>
<reference key="1">
    <citation type="journal article" date="2008" name="J. Bacteriol.">
        <title>Comparative genome analysis of 'Candidatus Phytoplasma australiense' (subgroup tuf-Australia I; rp-A) and 'Ca. Phytoplasma asteris' strains OY-M and AY-WB.</title>
        <authorList>
            <person name="Tran-Nguyen L.T."/>
            <person name="Kube M."/>
            <person name="Schneider B."/>
            <person name="Reinhardt R."/>
            <person name="Gibb K.S."/>
        </authorList>
    </citation>
    <scope>NUCLEOTIDE SEQUENCE [LARGE SCALE GENOMIC DNA]</scope>
</reference>
<evidence type="ECO:0000255" key="1">
    <source>
        <dbReference type="HAMAP-Rule" id="MF_00500"/>
    </source>
</evidence>
<evidence type="ECO:0000256" key="2">
    <source>
        <dbReference type="SAM" id="MobiDB-lite"/>
    </source>
</evidence>
<evidence type="ECO:0000305" key="3"/>
<protein>
    <recommendedName>
        <fullName evidence="1">Small ribosomal subunit protein bS20</fullName>
    </recommendedName>
    <alternativeName>
        <fullName evidence="3">30S ribosomal protein S20</fullName>
    </alternativeName>
</protein>
<gene>
    <name evidence="1" type="primary">rpsT</name>
    <name type="ordered locus">PA0599</name>
</gene>
<proteinExistence type="inferred from homology"/>
<name>RS20_PHYAS</name>
<sequence length="88" mass="10024">MANIKQQKKRNKTNEKRRLRNISFKSATKTIVKQVKIAVEQADKAKALANLSLAYQKLDKGASKKIYHANFVNRNKANLQKLVNTILS</sequence>
<feature type="chain" id="PRO_1000126491" description="Small ribosomal subunit protein bS20">
    <location>
        <begin position="1"/>
        <end position="88"/>
    </location>
</feature>
<feature type="region of interest" description="Disordered" evidence="2">
    <location>
        <begin position="1"/>
        <end position="20"/>
    </location>
</feature>
<comment type="function">
    <text evidence="1">Binds directly to 16S ribosomal RNA.</text>
</comment>
<comment type="similarity">
    <text evidence="1">Belongs to the bacterial ribosomal protein bS20 family.</text>
</comment>
<accession>B1VAG0</accession>
<dbReference type="EMBL" id="AM422018">
    <property type="protein sequence ID" value="CAM11933.1"/>
    <property type="molecule type" value="Genomic_DNA"/>
</dbReference>
<dbReference type="SMR" id="B1VAG0"/>
<dbReference type="STRING" id="59748.PA0599"/>
<dbReference type="KEGG" id="pal:PA0599"/>
<dbReference type="eggNOG" id="COG0268">
    <property type="taxonomic scope" value="Bacteria"/>
</dbReference>
<dbReference type="Proteomes" id="UP000008323">
    <property type="component" value="Chromosome"/>
</dbReference>
<dbReference type="GO" id="GO:0005829">
    <property type="term" value="C:cytosol"/>
    <property type="evidence" value="ECO:0007669"/>
    <property type="project" value="TreeGrafter"/>
</dbReference>
<dbReference type="GO" id="GO:0015935">
    <property type="term" value="C:small ribosomal subunit"/>
    <property type="evidence" value="ECO:0007669"/>
    <property type="project" value="TreeGrafter"/>
</dbReference>
<dbReference type="GO" id="GO:0070181">
    <property type="term" value="F:small ribosomal subunit rRNA binding"/>
    <property type="evidence" value="ECO:0007669"/>
    <property type="project" value="TreeGrafter"/>
</dbReference>
<dbReference type="GO" id="GO:0003735">
    <property type="term" value="F:structural constituent of ribosome"/>
    <property type="evidence" value="ECO:0007669"/>
    <property type="project" value="InterPro"/>
</dbReference>
<dbReference type="GO" id="GO:0006412">
    <property type="term" value="P:translation"/>
    <property type="evidence" value="ECO:0007669"/>
    <property type="project" value="UniProtKB-UniRule"/>
</dbReference>
<dbReference type="Gene3D" id="1.20.58.110">
    <property type="entry name" value="Ribosomal protein S20"/>
    <property type="match status" value="1"/>
</dbReference>
<dbReference type="HAMAP" id="MF_00500">
    <property type="entry name" value="Ribosomal_bS20"/>
    <property type="match status" value="1"/>
</dbReference>
<dbReference type="InterPro" id="IPR002583">
    <property type="entry name" value="Ribosomal_bS20"/>
</dbReference>
<dbReference type="InterPro" id="IPR036510">
    <property type="entry name" value="Ribosomal_bS20_sf"/>
</dbReference>
<dbReference type="NCBIfam" id="TIGR00029">
    <property type="entry name" value="S20"/>
    <property type="match status" value="1"/>
</dbReference>
<dbReference type="PANTHER" id="PTHR33398">
    <property type="entry name" value="30S RIBOSOMAL PROTEIN S20"/>
    <property type="match status" value="1"/>
</dbReference>
<dbReference type="PANTHER" id="PTHR33398:SF1">
    <property type="entry name" value="SMALL RIBOSOMAL SUBUNIT PROTEIN BS20C"/>
    <property type="match status" value="1"/>
</dbReference>
<dbReference type="Pfam" id="PF01649">
    <property type="entry name" value="Ribosomal_S20p"/>
    <property type="match status" value="1"/>
</dbReference>
<dbReference type="SUPFAM" id="SSF46992">
    <property type="entry name" value="Ribosomal protein S20"/>
    <property type="match status" value="1"/>
</dbReference>